<protein>
    <recommendedName>
        <fullName evidence="1">Regulatory protein RecX</fullName>
    </recommendedName>
</protein>
<dbReference type="EMBL" id="CP000970">
    <property type="protein sequence ID" value="ACB18090.1"/>
    <property type="molecule type" value="Genomic_DNA"/>
</dbReference>
<dbReference type="RefSeq" id="WP_000140495.1">
    <property type="nucleotide sequence ID" value="NC_010498.1"/>
</dbReference>
<dbReference type="SMR" id="B1LQ16"/>
<dbReference type="KEGG" id="ecm:EcSMS35_2821"/>
<dbReference type="HOGENOM" id="CLU_066607_3_2_6"/>
<dbReference type="Proteomes" id="UP000007011">
    <property type="component" value="Chromosome"/>
</dbReference>
<dbReference type="GO" id="GO:0005737">
    <property type="term" value="C:cytoplasm"/>
    <property type="evidence" value="ECO:0007669"/>
    <property type="project" value="UniProtKB-SubCell"/>
</dbReference>
<dbReference type="GO" id="GO:0006282">
    <property type="term" value="P:regulation of DNA repair"/>
    <property type="evidence" value="ECO:0007669"/>
    <property type="project" value="UniProtKB-UniRule"/>
</dbReference>
<dbReference type="FunFam" id="1.10.10.10:FF:000133">
    <property type="entry name" value="Regulatory protein RecX"/>
    <property type="match status" value="1"/>
</dbReference>
<dbReference type="FunFam" id="1.10.10.10:FF:000134">
    <property type="entry name" value="Regulatory protein RecX"/>
    <property type="match status" value="1"/>
</dbReference>
<dbReference type="FunFam" id="1.10.10.10:FF:000209">
    <property type="entry name" value="Regulatory protein RecX"/>
    <property type="match status" value="1"/>
</dbReference>
<dbReference type="Gene3D" id="1.10.10.10">
    <property type="entry name" value="Winged helix-like DNA-binding domain superfamily/Winged helix DNA-binding domain"/>
    <property type="match status" value="3"/>
</dbReference>
<dbReference type="HAMAP" id="MF_01114">
    <property type="entry name" value="RecX"/>
    <property type="match status" value="1"/>
</dbReference>
<dbReference type="InterPro" id="IPR053926">
    <property type="entry name" value="RecX_HTH_1st"/>
</dbReference>
<dbReference type="InterPro" id="IPR053924">
    <property type="entry name" value="RecX_HTH_2nd"/>
</dbReference>
<dbReference type="InterPro" id="IPR053925">
    <property type="entry name" value="RecX_HTH_3rd"/>
</dbReference>
<dbReference type="InterPro" id="IPR003783">
    <property type="entry name" value="Regulatory_RecX"/>
</dbReference>
<dbReference type="InterPro" id="IPR036388">
    <property type="entry name" value="WH-like_DNA-bd_sf"/>
</dbReference>
<dbReference type="NCBIfam" id="NF001052">
    <property type="entry name" value="PRK00117.1-1"/>
    <property type="match status" value="1"/>
</dbReference>
<dbReference type="PANTHER" id="PTHR33602">
    <property type="entry name" value="REGULATORY PROTEIN RECX FAMILY PROTEIN"/>
    <property type="match status" value="1"/>
</dbReference>
<dbReference type="PANTHER" id="PTHR33602:SF1">
    <property type="entry name" value="REGULATORY PROTEIN RECX FAMILY PROTEIN"/>
    <property type="match status" value="1"/>
</dbReference>
<dbReference type="Pfam" id="PF21982">
    <property type="entry name" value="RecX_HTH1"/>
    <property type="match status" value="1"/>
</dbReference>
<dbReference type="Pfam" id="PF02631">
    <property type="entry name" value="RecX_HTH2"/>
    <property type="match status" value="1"/>
</dbReference>
<dbReference type="Pfam" id="PF21981">
    <property type="entry name" value="RecX_HTH3"/>
    <property type="match status" value="1"/>
</dbReference>
<reference key="1">
    <citation type="journal article" date="2008" name="J. Bacteriol.">
        <title>Insights into the environmental resistance gene pool from the genome sequence of the multidrug-resistant environmental isolate Escherichia coli SMS-3-5.</title>
        <authorList>
            <person name="Fricke W.F."/>
            <person name="Wright M.S."/>
            <person name="Lindell A.H."/>
            <person name="Harkins D.M."/>
            <person name="Baker-Austin C."/>
            <person name="Ravel J."/>
            <person name="Stepanauskas R."/>
        </authorList>
    </citation>
    <scope>NUCLEOTIDE SEQUENCE [LARGE SCALE GENOMIC DNA]</scope>
    <source>
        <strain>SMS-3-5 / SECEC</strain>
    </source>
</reference>
<name>RECX_ECOSM</name>
<proteinExistence type="inferred from homology"/>
<gene>
    <name evidence="1" type="primary">recX</name>
    <name type="ordered locus">EcSMS35_2821</name>
</gene>
<organism>
    <name type="scientific">Escherichia coli (strain SMS-3-5 / SECEC)</name>
    <dbReference type="NCBI Taxonomy" id="439855"/>
    <lineage>
        <taxon>Bacteria</taxon>
        <taxon>Pseudomonadati</taxon>
        <taxon>Pseudomonadota</taxon>
        <taxon>Gammaproteobacteria</taxon>
        <taxon>Enterobacterales</taxon>
        <taxon>Enterobacteriaceae</taxon>
        <taxon>Escherichia</taxon>
    </lineage>
</organism>
<accession>B1LQ16</accession>
<keyword id="KW-0963">Cytoplasm</keyword>
<feature type="chain" id="PRO_1000137167" description="Regulatory protein RecX">
    <location>
        <begin position="1"/>
        <end position="166"/>
    </location>
</feature>
<comment type="function">
    <text evidence="1">Modulates RecA activity.</text>
</comment>
<comment type="subcellular location">
    <subcellularLocation>
        <location evidence="1">Cytoplasm</location>
    </subcellularLocation>
</comment>
<comment type="similarity">
    <text evidence="1">Belongs to the RecX family.</text>
</comment>
<sequence length="166" mass="19367">MTESTSLRPAYARLLDRAVRILAVRDHSEQELRRKLAAPIMGKNGPEEIDATAEDYERVIAWCHEHGYLDDSRFVARFIASRSRKGYGPARIRQELNQKGISREATEKAMRECDIDWCALARDQATRKYGEPLPTVFSEKVKIQRFLLYRGYLMEDIQDIWRNFAD</sequence>
<evidence type="ECO:0000255" key="1">
    <source>
        <dbReference type="HAMAP-Rule" id="MF_01114"/>
    </source>
</evidence>